<dbReference type="EC" id="2.1.1.192" evidence="1"/>
<dbReference type="EMBL" id="AE014299">
    <property type="protein sequence ID" value="AAN56313.1"/>
    <property type="molecule type" value="Genomic_DNA"/>
</dbReference>
<dbReference type="RefSeq" id="NP_718869.1">
    <property type="nucleotide sequence ID" value="NC_004347.2"/>
</dbReference>
<dbReference type="RefSeq" id="WP_011073191.1">
    <property type="nucleotide sequence ID" value="NC_004347.2"/>
</dbReference>
<dbReference type="SMR" id="Q8EC29"/>
<dbReference type="STRING" id="211586.SO_3315"/>
<dbReference type="PaxDb" id="211586-SO_3315"/>
<dbReference type="KEGG" id="son:SO_3315"/>
<dbReference type="PATRIC" id="fig|211586.12.peg.3216"/>
<dbReference type="eggNOG" id="COG0820">
    <property type="taxonomic scope" value="Bacteria"/>
</dbReference>
<dbReference type="HOGENOM" id="CLU_029101_2_0_6"/>
<dbReference type="OrthoDB" id="9793973at2"/>
<dbReference type="PhylomeDB" id="Q8EC29"/>
<dbReference type="BioCyc" id="SONE211586:G1GMP-3087-MONOMER"/>
<dbReference type="Proteomes" id="UP000008186">
    <property type="component" value="Chromosome"/>
</dbReference>
<dbReference type="GO" id="GO:0005737">
    <property type="term" value="C:cytoplasm"/>
    <property type="evidence" value="ECO:0007669"/>
    <property type="project" value="UniProtKB-SubCell"/>
</dbReference>
<dbReference type="GO" id="GO:0051539">
    <property type="term" value="F:4 iron, 4 sulfur cluster binding"/>
    <property type="evidence" value="ECO:0007669"/>
    <property type="project" value="UniProtKB-UniRule"/>
</dbReference>
<dbReference type="GO" id="GO:0046872">
    <property type="term" value="F:metal ion binding"/>
    <property type="evidence" value="ECO:0007669"/>
    <property type="project" value="UniProtKB-KW"/>
</dbReference>
<dbReference type="GO" id="GO:0070040">
    <property type="term" value="F:rRNA (adenine(2503)-C2-)-methyltransferase activity"/>
    <property type="evidence" value="ECO:0007669"/>
    <property type="project" value="UniProtKB-UniRule"/>
</dbReference>
<dbReference type="GO" id="GO:0019843">
    <property type="term" value="F:rRNA binding"/>
    <property type="evidence" value="ECO:0007669"/>
    <property type="project" value="UniProtKB-UniRule"/>
</dbReference>
<dbReference type="GO" id="GO:0002935">
    <property type="term" value="F:tRNA (adenine(37)-C2)-methyltransferase activity"/>
    <property type="evidence" value="ECO:0007669"/>
    <property type="project" value="UniProtKB-UniRule"/>
</dbReference>
<dbReference type="GO" id="GO:0000049">
    <property type="term" value="F:tRNA binding"/>
    <property type="evidence" value="ECO:0007669"/>
    <property type="project" value="UniProtKB-UniRule"/>
</dbReference>
<dbReference type="GO" id="GO:0070475">
    <property type="term" value="P:rRNA base methylation"/>
    <property type="evidence" value="ECO:0000318"/>
    <property type="project" value="GO_Central"/>
</dbReference>
<dbReference type="GO" id="GO:0030488">
    <property type="term" value="P:tRNA methylation"/>
    <property type="evidence" value="ECO:0000318"/>
    <property type="project" value="GO_Central"/>
</dbReference>
<dbReference type="CDD" id="cd01335">
    <property type="entry name" value="Radical_SAM"/>
    <property type="match status" value="1"/>
</dbReference>
<dbReference type="FunFam" id="1.10.150.530:FF:000003">
    <property type="entry name" value="Dual-specificity RNA methyltransferase RlmN"/>
    <property type="match status" value="1"/>
</dbReference>
<dbReference type="FunFam" id="3.20.20.70:FF:000008">
    <property type="entry name" value="Dual-specificity RNA methyltransferase RlmN"/>
    <property type="match status" value="1"/>
</dbReference>
<dbReference type="Gene3D" id="1.10.150.530">
    <property type="match status" value="1"/>
</dbReference>
<dbReference type="Gene3D" id="3.20.20.70">
    <property type="entry name" value="Aldolase class I"/>
    <property type="match status" value="1"/>
</dbReference>
<dbReference type="HAMAP" id="MF_01849">
    <property type="entry name" value="RNA_methyltr_RlmN"/>
    <property type="match status" value="1"/>
</dbReference>
<dbReference type="InterPro" id="IPR013785">
    <property type="entry name" value="Aldolase_TIM"/>
</dbReference>
<dbReference type="InterPro" id="IPR040072">
    <property type="entry name" value="Methyltransferase_A"/>
</dbReference>
<dbReference type="InterPro" id="IPR048641">
    <property type="entry name" value="RlmN_N"/>
</dbReference>
<dbReference type="InterPro" id="IPR027492">
    <property type="entry name" value="RNA_MTrfase_RlmN"/>
</dbReference>
<dbReference type="InterPro" id="IPR004383">
    <property type="entry name" value="rRNA_lsu_MTrfase_RlmN/Cfr"/>
</dbReference>
<dbReference type="InterPro" id="IPR007197">
    <property type="entry name" value="rSAM"/>
</dbReference>
<dbReference type="NCBIfam" id="NF008396">
    <property type="entry name" value="PRK11194.1"/>
    <property type="match status" value="1"/>
</dbReference>
<dbReference type="NCBIfam" id="TIGR00048">
    <property type="entry name" value="rRNA_mod_RlmN"/>
    <property type="match status" value="1"/>
</dbReference>
<dbReference type="PANTHER" id="PTHR30544">
    <property type="entry name" value="23S RRNA METHYLTRANSFERASE"/>
    <property type="match status" value="1"/>
</dbReference>
<dbReference type="PANTHER" id="PTHR30544:SF5">
    <property type="entry name" value="RADICAL SAM CORE DOMAIN-CONTAINING PROTEIN"/>
    <property type="match status" value="1"/>
</dbReference>
<dbReference type="Pfam" id="PF04055">
    <property type="entry name" value="Radical_SAM"/>
    <property type="match status" value="1"/>
</dbReference>
<dbReference type="Pfam" id="PF21016">
    <property type="entry name" value="RlmN_N"/>
    <property type="match status" value="1"/>
</dbReference>
<dbReference type="PIRSF" id="PIRSF006004">
    <property type="entry name" value="CHP00048"/>
    <property type="match status" value="1"/>
</dbReference>
<dbReference type="SFLD" id="SFLDF00275">
    <property type="entry name" value="adenosine_C2_methyltransferase"/>
    <property type="match status" value="1"/>
</dbReference>
<dbReference type="SFLD" id="SFLDG01062">
    <property type="entry name" value="methyltransferase_(Class_A)"/>
    <property type="match status" value="1"/>
</dbReference>
<dbReference type="SUPFAM" id="SSF102114">
    <property type="entry name" value="Radical SAM enzymes"/>
    <property type="match status" value="1"/>
</dbReference>
<dbReference type="PROSITE" id="PS51918">
    <property type="entry name" value="RADICAL_SAM"/>
    <property type="match status" value="1"/>
</dbReference>
<evidence type="ECO:0000255" key="1">
    <source>
        <dbReference type="HAMAP-Rule" id="MF_01849"/>
    </source>
</evidence>
<evidence type="ECO:0000255" key="2">
    <source>
        <dbReference type="PROSITE-ProRule" id="PRU01266"/>
    </source>
</evidence>
<accession>Q8EC29</accession>
<feature type="chain" id="PRO_0000350400" description="Dual-specificity RNA methyltransferase RlmN">
    <location>
        <begin position="1"/>
        <end position="373"/>
    </location>
</feature>
<feature type="domain" description="Radical SAM core" evidence="2">
    <location>
        <begin position="100"/>
        <end position="339"/>
    </location>
</feature>
<feature type="active site" description="Proton acceptor" evidence="1">
    <location>
        <position position="94"/>
    </location>
</feature>
<feature type="active site" description="S-methylcysteine intermediate" evidence="1">
    <location>
        <position position="344"/>
    </location>
</feature>
<feature type="binding site" evidence="1">
    <location>
        <position position="114"/>
    </location>
    <ligand>
        <name>[4Fe-4S] cluster</name>
        <dbReference type="ChEBI" id="CHEBI:49883"/>
        <note>4Fe-4S-S-AdoMet</note>
    </ligand>
</feature>
<feature type="binding site" evidence="1">
    <location>
        <position position="118"/>
    </location>
    <ligand>
        <name>[4Fe-4S] cluster</name>
        <dbReference type="ChEBI" id="CHEBI:49883"/>
        <note>4Fe-4S-S-AdoMet</note>
    </ligand>
</feature>
<feature type="binding site" evidence="1">
    <location>
        <position position="121"/>
    </location>
    <ligand>
        <name>[4Fe-4S] cluster</name>
        <dbReference type="ChEBI" id="CHEBI:49883"/>
        <note>4Fe-4S-S-AdoMet</note>
    </ligand>
</feature>
<feature type="binding site" evidence="1">
    <location>
        <begin position="168"/>
        <end position="169"/>
    </location>
    <ligand>
        <name>S-adenosyl-L-methionine</name>
        <dbReference type="ChEBI" id="CHEBI:59789"/>
    </ligand>
</feature>
<feature type="binding site" evidence="1">
    <location>
        <position position="200"/>
    </location>
    <ligand>
        <name>S-adenosyl-L-methionine</name>
        <dbReference type="ChEBI" id="CHEBI:59789"/>
    </ligand>
</feature>
<feature type="binding site" evidence="1">
    <location>
        <begin position="222"/>
        <end position="224"/>
    </location>
    <ligand>
        <name>S-adenosyl-L-methionine</name>
        <dbReference type="ChEBI" id="CHEBI:59789"/>
    </ligand>
</feature>
<feature type="binding site" evidence="1">
    <location>
        <position position="301"/>
    </location>
    <ligand>
        <name>S-adenosyl-L-methionine</name>
        <dbReference type="ChEBI" id="CHEBI:59789"/>
    </ligand>
</feature>
<feature type="disulfide bond" description="(transient)" evidence="1">
    <location>
        <begin position="107"/>
        <end position="344"/>
    </location>
</feature>
<protein>
    <recommendedName>
        <fullName evidence="1">Dual-specificity RNA methyltransferase RlmN</fullName>
        <ecNumber evidence="1">2.1.1.192</ecNumber>
    </recommendedName>
    <alternativeName>
        <fullName evidence="1">23S rRNA (adenine(2503)-C(2))-methyltransferase</fullName>
    </alternativeName>
    <alternativeName>
        <fullName evidence="1">23S rRNA m2A2503 methyltransferase</fullName>
    </alternativeName>
    <alternativeName>
        <fullName evidence="1">Ribosomal RNA large subunit methyltransferase N</fullName>
    </alternativeName>
    <alternativeName>
        <fullName evidence="1">tRNA (adenine(37)-C(2))-methyltransferase</fullName>
    </alternativeName>
    <alternativeName>
        <fullName evidence="1">tRNA m2A37 methyltransferase</fullName>
    </alternativeName>
</protein>
<keyword id="KW-0004">4Fe-4S</keyword>
<keyword id="KW-0963">Cytoplasm</keyword>
<keyword id="KW-1015">Disulfide bond</keyword>
<keyword id="KW-0408">Iron</keyword>
<keyword id="KW-0411">Iron-sulfur</keyword>
<keyword id="KW-0479">Metal-binding</keyword>
<keyword id="KW-0489">Methyltransferase</keyword>
<keyword id="KW-1185">Reference proteome</keyword>
<keyword id="KW-0698">rRNA processing</keyword>
<keyword id="KW-0949">S-adenosyl-L-methionine</keyword>
<keyword id="KW-0808">Transferase</keyword>
<keyword id="KW-0819">tRNA processing</keyword>
<reference key="1">
    <citation type="journal article" date="2002" name="Nat. Biotechnol.">
        <title>Genome sequence of the dissimilatory metal ion-reducing bacterium Shewanella oneidensis.</title>
        <authorList>
            <person name="Heidelberg J.F."/>
            <person name="Paulsen I.T."/>
            <person name="Nelson K.E."/>
            <person name="Gaidos E.J."/>
            <person name="Nelson W.C."/>
            <person name="Read T.D."/>
            <person name="Eisen J.A."/>
            <person name="Seshadri R."/>
            <person name="Ward N.L."/>
            <person name="Methe B.A."/>
            <person name="Clayton R.A."/>
            <person name="Meyer T."/>
            <person name="Tsapin A."/>
            <person name="Scott J."/>
            <person name="Beanan M.J."/>
            <person name="Brinkac L.M."/>
            <person name="Daugherty S.C."/>
            <person name="DeBoy R.T."/>
            <person name="Dodson R.J."/>
            <person name="Durkin A.S."/>
            <person name="Haft D.H."/>
            <person name="Kolonay J.F."/>
            <person name="Madupu R."/>
            <person name="Peterson J.D."/>
            <person name="Umayam L.A."/>
            <person name="White O."/>
            <person name="Wolf A.M."/>
            <person name="Vamathevan J.J."/>
            <person name="Weidman J.F."/>
            <person name="Impraim M."/>
            <person name="Lee K."/>
            <person name="Berry K.J."/>
            <person name="Lee C."/>
            <person name="Mueller J."/>
            <person name="Khouri H.M."/>
            <person name="Gill J."/>
            <person name="Utterback T.R."/>
            <person name="McDonald L.A."/>
            <person name="Feldblyum T.V."/>
            <person name="Smith H.O."/>
            <person name="Venter J.C."/>
            <person name="Nealson K.H."/>
            <person name="Fraser C.M."/>
        </authorList>
    </citation>
    <scope>NUCLEOTIDE SEQUENCE [LARGE SCALE GENOMIC DNA]</scope>
    <source>
        <strain>ATCC 700550 / JCM 31522 / CIP 106686 / LMG 19005 / NCIMB 14063 / MR-1</strain>
    </source>
</reference>
<comment type="function">
    <text evidence="1">Specifically methylates position 2 of adenine 2503 in 23S rRNA and position 2 of adenine 37 in tRNAs. m2A2503 modification seems to play a crucial role in the proofreading step occurring at the peptidyl transferase center and thus would serve to optimize ribosomal fidelity.</text>
</comment>
<comment type="catalytic activity">
    <reaction evidence="1">
        <text>adenosine(2503) in 23S rRNA + 2 reduced [2Fe-2S]-[ferredoxin] + 2 S-adenosyl-L-methionine = 2-methyladenosine(2503) in 23S rRNA + 5'-deoxyadenosine + L-methionine + 2 oxidized [2Fe-2S]-[ferredoxin] + S-adenosyl-L-homocysteine</text>
        <dbReference type="Rhea" id="RHEA:42916"/>
        <dbReference type="Rhea" id="RHEA-COMP:10000"/>
        <dbReference type="Rhea" id="RHEA-COMP:10001"/>
        <dbReference type="Rhea" id="RHEA-COMP:10152"/>
        <dbReference type="Rhea" id="RHEA-COMP:10282"/>
        <dbReference type="ChEBI" id="CHEBI:17319"/>
        <dbReference type="ChEBI" id="CHEBI:33737"/>
        <dbReference type="ChEBI" id="CHEBI:33738"/>
        <dbReference type="ChEBI" id="CHEBI:57844"/>
        <dbReference type="ChEBI" id="CHEBI:57856"/>
        <dbReference type="ChEBI" id="CHEBI:59789"/>
        <dbReference type="ChEBI" id="CHEBI:74411"/>
        <dbReference type="ChEBI" id="CHEBI:74497"/>
        <dbReference type="EC" id="2.1.1.192"/>
    </reaction>
</comment>
<comment type="catalytic activity">
    <reaction evidence="1">
        <text>adenosine(37) in tRNA + 2 reduced [2Fe-2S]-[ferredoxin] + 2 S-adenosyl-L-methionine = 2-methyladenosine(37) in tRNA + 5'-deoxyadenosine + L-methionine + 2 oxidized [2Fe-2S]-[ferredoxin] + S-adenosyl-L-homocysteine</text>
        <dbReference type="Rhea" id="RHEA:43332"/>
        <dbReference type="Rhea" id="RHEA-COMP:10000"/>
        <dbReference type="Rhea" id="RHEA-COMP:10001"/>
        <dbReference type="Rhea" id="RHEA-COMP:10162"/>
        <dbReference type="Rhea" id="RHEA-COMP:10485"/>
        <dbReference type="ChEBI" id="CHEBI:17319"/>
        <dbReference type="ChEBI" id="CHEBI:33737"/>
        <dbReference type="ChEBI" id="CHEBI:33738"/>
        <dbReference type="ChEBI" id="CHEBI:57844"/>
        <dbReference type="ChEBI" id="CHEBI:57856"/>
        <dbReference type="ChEBI" id="CHEBI:59789"/>
        <dbReference type="ChEBI" id="CHEBI:74411"/>
        <dbReference type="ChEBI" id="CHEBI:74497"/>
        <dbReference type="EC" id="2.1.1.192"/>
    </reaction>
</comment>
<comment type="cofactor">
    <cofactor evidence="1">
        <name>[4Fe-4S] cluster</name>
        <dbReference type="ChEBI" id="CHEBI:49883"/>
    </cofactor>
    <text evidence="1">Binds 1 [4Fe-4S] cluster. The cluster is coordinated with 3 cysteines and an exchangeable S-adenosyl-L-methionine.</text>
</comment>
<comment type="subcellular location">
    <subcellularLocation>
        <location evidence="1">Cytoplasm</location>
    </subcellularLocation>
</comment>
<comment type="miscellaneous">
    <text evidence="1">Reaction proceeds by a ping-pong mechanism involving intermediate methylation of a conserved cysteine residue.</text>
</comment>
<comment type="similarity">
    <text evidence="1">Belongs to the radical SAM superfamily. RlmN family.</text>
</comment>
<gene>
    <name evidence="1" type="primary">rlmN</name>
    <name type="ordered locus">SO_3315</name>
</gene>
<proteinExistence type="inferred from homology"/>
<sequence>MSEKKINLLDLDRKAMRALFADLGEKPFRADQLMKWIYHFGVSDFEEMTNINKVLRQKLAARCEIVAPEISGYQKSADGTIKFAIHVGEGQEVETVYIPEDDRATLCVSSQVGCALECTFCSTAQQGFNRNLTVSEIVGQIWRVSHFLGFAKETGERPITNVVMMGMGEPLLNLANVIPAMDIMLDDFGFSLSKRRVTLSTSGVVPALDKLGDALDVALAVSIHAPNDELRDILVPVNKKYPLQEFLAGIRRYIAKSNANRGRVTVEYVMLDHINDSTEQAHELAQLMKDTPCKVNLIPFNPYPGSPYGRSSNSRIDRFSKVLMEYGLTVIVRKTRGDDIDAACGQLAGDIRDRTKRLAKKRMQENQISVTMN</sequence>
<name>RLMN_SHEON</name>
<organism>
    <name type="scientific">Shewanella oneidensis (strain ATCC 700550 / JCM 31522 / CIP 106686 / LMG 19005 / NCIMB 14063 / MR-1)</name>
    <dbReference type="NCBI Taxonomy" id="211586"/>
    <lineage>
        <taxon>Bacteria</taxon>
        <taxon>Pseudomonadati</taxon>
        <taxon>Pseudomonadota</taxon>
        <taxon>Gammaproteobacteria</taxon>
        <taxon>Alteromonadales</taxon>
        <taxon>Shewanellaceae</taxon>
        <taxon>Shewanella</taxon>
    </lineage>
</organism>